<organism>
    <name type="scientific">Geotalea daltonii (strain DSM 22248 / JCM 15807 / FRC-32)</name>
    <name type="common">Geobacter daltonii</name>
    <dbReference type="NCBI Taxonomy" id="316067"/>
    <lineage>
        <taxon>Bacteria</taxon>
        <taxon>Pseudomonadati</taxon>
        <taxon>Thermodesulfobacteriota</taxon>
        <taxon>Desulfuromonadia</taxon>
        <taxon>Geobacterales</taxon>
        <taxon>Geobacteraceae</taxon>
        <taxon>Geotalea</taxon>
    </lineage>
</organism>
<gene>
    <name evidence="1" type="primary">rplF</name>
    <name type="ordered locus">Geob_3610</name>
</gene>
<reference key="1">
    <citation type="submission" date="2009-01" db="EMBL/GenBank/DDBJ databases">
        <title>Complete sequence of Geobacter sp. FRC-32.</title>
        <authorList>
            <consortium name="US DOE Joint Genome Institute"/>
            <person name="Lucas S."/>
            <person name="Copeland A."/>
            <person name="Lapidus A."/>
            <person name="Glavina del Rio T."/>
            <person name="Dalin E."/>
            <person name="Tice H."/>
            <person name="Bruce D."/>
            <person name="Goodwin L."/>
            <person name="Pitluck S."/>
            <person name="Saunders E."/>
            <person name="Brettin T."/>
            <person name="Detter J.C."/>
            <person name="Han C."/>
            <person name="Larimer F."/>
            <person name="Land M."/>
            <person name="Hauser L."/>
            <person name="Kyrpides N."/>
            <person name="Ovchinnikova G."/>
            <person name="Kostka J."/>
            <person name="Richardson P."/>
        </authorList>
    </citation>
    <scope>NUCLEOTIDE SEQUENCE [LARGE SCALE GENOMIC DNA]</scope>
    <source>
        <strain>DSM 22248 / JCM 15807 / FRC-32</strain>
    </source>
</reference>
<name>RL6_GEODF</name>
<comment type="function">
    <text evidence="1">This protein binds to the 23S rRNA, and is important in its secondary structure. It is located near the subunit interface in the base of the L7/L12 stalk, and near the tRNA binding site of the peptidyltransferase center.</text>
</comment>
<comment type="subunit">
    <text evidence="1">Part of the 50S ribosomal subunit.</text>
</comment>
<comment type="similarity">
    <text evidence="1">Belongs to the universal ribosomal protein uL6 family.</text>
</comment>
<evidence type="ECO:0000255" key="1">
    <source>
        <dbReference type="HAMAP-Rule" id="MF_01365"/>
    </source>
</evidence>
<evidence type="ECO:0000305" key="2"/>
<protein>
    <recommendedName>
        <fullName evidence="1">Large ribosomal subunit protein uL6</fullName>
    </recommendedName>
    <alternativeName>
        <fullName evidence="2">50S ribosomal protein L6</fullName>
    </alternativeName>
</protein>
<proteinExistence type="inferred from homology"/>
<accession>B9M6G3</accession>
<feature type="chain" id="PRO_1000166812" description="Large ribosomal subunit protein uL6">
    <location>
        <begin position="1"/>
        <end position="179"/>
    </location>
</feature>
<dbReference type="EMBL" id="CP001390">
    <property type="protein sequence ID" value="ACM21951.1"/>
    <property type="molecule type" value="Genomic_DNA"/>
</dbReference>
<dbReference type="RefSeq" id="WP_012648679.1">
    <property type="nucleotide sequence ID" value="NC_011979.1"/>
</dbReference>
<dbReference type="SMR" id="B9M6G3"/>
<dbReference type="STRING" id="316067.Geob_3610"/>
<dbReference type="KEGG" id="geo:Geob_3610"/>
<dbReference type="eggNOG" id="COG0097">
    <property type="taxonomic scope" value="Bacteria"/>
</dbReference>
<dbReference type="HOGENOM" id="CLU_065464_1_2_7"/>
<dbReference type="OrthoDB" id="9805007at2"/>
<dbReference type="Proteomes" id="UP000007721">
    <property type="component" value="Chromosome"/>
</dbReference>
<dbReference type="GO" id="GO:0022625">
    <property type="term" value="C:cytosolic large ribosomal subunit"/>
    <property type="evidence" value="ECO:0007669"/>
    <property type="project" value="TreeGrafter"/>
</dbReference>
<dbReference type="GO" id="GO:0019843">
    <property type="term" value="F:rRNA binding"/>
    <property type="evidence" value="ECO:0007669"/>
    <property type="project" value="UniProtKB-UniRule"/>
</dbReference>
<dbReference type="GO" id="GO:0003735">
    <property type="term" value="F:structural constituent of ribosome"/>
    <property type="evidence" value="ECO:0007669"/>
    <property type="project" value="InterPro"/>
</dbReference>
<dbReference type="GO" id="GO:0002181">
    <property type="term" value="P:cytoplasmic translation"/>
    <property type="evidence" value="ECO:0007669"/>
    <property type="project" value="TreeGrafter"/>
</dbReference>
<dbReference type="FunFam" id="3.90.930.12:FF:000001">
    <property type="entry name" value="50S ribosomal protein L6"/>
    <property type="match status" value="1"/>
</dbReference>
<dbReference type="FunFam" id="3.90.930.12:FF:000002">
    <property type="entry name" value="50S ribosomal protein L6"/>
    <property type="match status" value="1"/>
</dbReference>
<dbReference type="Gene3D" id="3.90.930.12">
    <property type="entry name" value="Ribosomal protein L6, alpha-beta domain"/>
    <property type="match status" value="2"/>
</dbReference>
<dbReference type="HAMAP" id="MF_01365_B">
    <property type="entry name" value="Ribosomal_uL6_B"/>
    <property type="match status" value="1"/>
</dbReference>
<dbReference type="InterPro" id="IPR000702">
    <property type="entry name" value="Ribosomal_uL6-like"/>
</dbReference>
<dbReference type="InterPro" id="IPR036789">
    <property type="entry name" value="Ribosomal_uL6-like_a/b-dom_sf"/>
</dbReference>
<dbReference type="InterPro" id="IPR020040">
    <property type="entry name" value="Ribosomal_uL6_a/b-dom"/>
</dbReference>
<dbReference type="InterPro" id="IPR019906">
    <property type="entry name" value="Ribosomal_uL6_bac-type"/>
</dbReference>
<dbReference type="InterPro" id="IPR002358">
    <property type="entry name" value="Ribosomal_uL6_CS"/>
</dbReference>
<dbReference type="NCBIfam" id="TIGR03654">
    <property type="entry name" value="L6_bact"/>
    <property type="match status" value="1"/>
</dbReference>
<dbReference type="PANTHER" id="PTHR11655">
    <property type="entry name" value="60S/50S RIBOSOMAL PROTEIN L6/L9"/>
    <property type="match status" value="1"/>
</dbReference>
<dbReference type="PANTHER" id="PTHR11655:SF14">
    <property type="entry name" value="LARGE RIBOSOMAL SUBUNIT PROTEIN UL6M"/>
    <property type="match status" value="1"/>
</dbReference>
<dbReference type="Pfam" id="PF00347">
    <property type="entry name" value="Ribosomal_L6"/>
    <property type="match status" value="2"/>
</dbReference>
<dbReference type="PIRSF" id="PIRSF002162">
    <property type="entry name" value="Ribosomal_L6"/>
    <property type="match status" value="1"/>
</dbReference>
<dbReference type="PRINTS" id="PR00059">
    <property type="entry name" value="RIBOSOMALL6"/>
</dbReference>
<dbReference type="SUPFAM" id="SSF56053">
    <property type="entry name" value="Ribosomal protein L6"/>
    <property type="match status" value="2"/>
</dbReference>
<dbReference type="PROSITE" id="PS00525">
    <property type="entry name" value="RIBOSOMAL_L6_1"/>
    <property type="match status" value="1"/>
</dbReference>
<sequence>MSRIGKLPIEIPKGVKISYTDSNLQVVGPKGTLSRTIMSGVTIEMTENHISVSRDDDGIKSRSAHGLTRTLINNMVTGVTKGFETALEINGVGYRAELKGDVLNLSLGYSHPINFSLPKGINVEVDKMTKILVKGVDKELVGQTAAKIRDFRGPEPYKGKGVKYADETILRKAGKTGKK</sequence>
<keyword id="KW-1185">Reference proteome</keyword>
<keyword id="KW-0687">Ribonucleoprotein</keyword>
<keyword id="KW-0689">Ribosomal protein</keyword>
<keyword id="KW-0694">RNA-binding</keyword>
<keyword id="KW-0699">rRNA-binding</keyword>